<gene>
    <name evidence="1" type="primary">miaA</name>
    <name type="ordered locus">VC_0346</name>
</gene>
<dbReference type="EC" id="2.5.1.75" evidence="1"/>
<dbReference type="EMBL" id="AE003852">
    <property type="protein sequence ID" value="AAF93519.1"/>
    <property type="molecule type" value="Genomic_DNA"/>
</dbReference>
<dbReference type="PIR" id="B82334">
    <property type="entry name" value="B82334"/>
</dbReference>
<dbReference type="RefSeq" id="NP_230000.1">
    <property type="nucleotide sequence ID" value="NC_002505.1"/>
</dbReference>
<dbReference type="RefSeq" id="WP_000192300.1">
    <property type="nucleotide sequence ID" value="NZ_LT906614.1"/>
</dbReference>
<dbReference type="SMR" id="Q9KV12"/>
<dbReference type="STRING" id="243277.VC_0346"/>
<dbReference type="DNASU" id="2615059"/>
<dbReference type="EnsemblBacteria" id="AAF93519">
    <property type="protein sequence ID" value="AAF93519"/>
    <property type="gene ID" value="VC_0346"/>
</dbReference>
<dbReference type="KEGG" id="vch:VC_0346"/>
<dbReference type="PATRIC" id="fig|243277.26.peg.323"/>
<dbReference type="eggNOG" id="COG0324">
    <property type="taxonomic scope" value="Bacteria"/>
</dbReference>
<dbReference type="HOGENOM" id="CLU_032616_0_0_6"/>
<dbReference type="Proteomes" id="UP000000584">
    <property type="component" value="Chromosome 1"/>
</dbReference>
<dbReference type="GO" id="GO:0005524">
    <property type="term" value="F:ATP binding"/>
    <property type="evidence" value="ECO:0007669"/>
    <property type="project" value="UniProtKB-UniRule"/>
</dbReference>
<dbReference type="GO" id="GO:0052381">
    <property type="term" value="F:tRNA dimethylallyltransferase activity"/>
    <property type="evidence" value="ECO:0000318"/>
    <property type="project" value="GO_Central"/>
</dbReference>
<dbReference type="GO" id="GO:0006400">
    <property type="term" value="P:tRNA modification"/>
    <property type="evidence" value="ECO:0000318"/>
    <property type="project" value="GO_Central"/>
</dbReference>
<dbReference type="FunFam" id="1.10.20.140:FF:000001">
    <property type="entry name" value="tRNA dimethylallyltransferase"/>
    <property type="match status" value="1"/>
</dbReference>
<dbReference type="Gene3D" id="1.10.20.140">
    <property type="match status" value="1"/>
</dbReference>
<dbReference type="Gene3D" id="3.40.50.300">
    <property type="entry name" value="P-loop containing nucleotide triphosphate hydrolases"/>
    <property type="match status" value="1"/>
</dbReference>
<dbReference type="HAMAP" id="MF_00185">
    <property type="entry name" value="IPP_trans"/>
    <property type="match status" value="1"/>
</dbReference>
<dbReference type="InterPro" id="IPR039657">
    <property type="entry name" value="Dimethylallyltransferase"/>
</dbReference>
<dbReference type="InterPro" id="IPR018022">
    <property type="entry name" value="IPT"/>
</dbReference>
<dbReference type="InterPro" id="IPR027417">
    <property type="entry name" value="P-loop_NTPase"/>
</dbReference>
<dbReference type="NCBIfam" id="TIGR00174">
    <property type="entry name" value="miaA"/>
    <property type="match status" value="1"/>
</dbReference>
<dbReference type="PANTHER" id="PTHR11088">
    <property type="entry name" value="TRNA DIMETHYLALLYLTRANSFERASE"/>
    <property type="match status" value="1"/>
</dbReference>
<dbReference type="PANTHER" id="PTHR11088:SF60">
    <property type="entry name" value="TRNA DIMETHYLALLYLTRANSFERASE"/>
    <property type="match status" value="1"/>
</dbReference>
<dbReference type="Pfam" id="PF01715">
    <property type="entry name" value="IPPT"/>
    <property type="match status" value="1"/>
</dbReference>
<dbReference type="SUPFAM" id="SSF52540">
    <property type="entry name" value="P-loop containing nucleoside triphosphate hydrolases"/>
    <property type="match status" value="1"/>
</dbReference>
<sequence>MTQKLPLALFLMGPTASGKTDLAIRLRQKYPVEIISVDSALIYRGMDIGTAKPDAQELALAPHRLIDILDPSEAYSAADFRRDALKEMADIVAQGKIPLLVGGTMLYFKALLEGLSPLPAADPVIRQQIELEAEKLGWQALHDQLQQIDPVSAQRIHPNDPQRLSRALEVYRISGKTLTELTQTKGEAIPYRVLQFAIAPKERAELHRRIELRFEKMVESGFEEEVKALYARDDLHPDLPSIRCVGYRQMWDYLDGHGTLDEAIYRGICATRQLAKRQITWLRSWDDLTWLDSENVDQAVETLSNAIASNEISCV</sequence>
<feature type="chain" id="PRO_0000164002" description="tRNA dimethylallyltransferase">
    <location>
        <begin position="1"/>
        <end position="315"/>
    </location>
</feature>
<feature type="region of interest" description="Interaction with substrate tRNA" evidence="1">
    <location>
        <begin position="38"/>
        <end position="41"/>
    </location>
</feature>
<feature type="region of interest" description="Interaction with substrate tRNA" evidence="1">
    <location>
        <begin position="162"/>
        <end position="166"/>
    </location>
</feature>
<feature type="region of interest" description="Interaction with substrate tRNA" evidence="1">
    <location>
        <begin position="243"/>
        <end position="248"/>
    </location>
</feature>
<feature type="region of interest" description="Interaction with substrate tRNA" evidence="1">
    <location>
        <begin position="276"/>
        <end position="283"/>
    </location>
</feature>
<feature type="binding site" evidence="1">
    <location>
        <begin position="13"/>
        <end position="20"/>
    </location>
    <ligand>
        <name>ATP</name>
        <dbReference type="ChEBI" id="CHEBI:30616"/>
    </ligand>
</feature>
<feature type="binding site" evidence="1">
    <location>
        <begin position="15"/>
        <end position="20"/>
    </location>
    <ligand>
        <name>substrate</name>
    </ligand>
</feature>
<feature type="site" description="Interaction with substrate tRNA" evidence="1">
    <location>
        <position position="104"/>
    </location>
</feature>
<feature type="site" description="Interaction with substrate tRNA" evidence="1">
    <location>
        <position position="126"/>
    </location>
</feature>
<name>MIAA_VIBCH</name>
<evidence type="ECO:0000255" key="1">
    <source>
        <dbReference type="HAMAP-Rule" id="MF_00185"/>
    </source>
</evidence>
<comment type="function">
    <text evidence="1">Catalyzes the transfer of a dimethylallyl group onto the adenine at position 37 in tRNAs that read codons beginning with uridine, leading to the formation of N6-(dimethylallyl)adenosine (i(6)A).</text>
</comment>
<comment type="catalytic activity">
    <reaction evidence="1">
        <text>adenosine(37) in tRNA + dimethylallyl diphosphate = N(6)-dimethylallyladenosine(37) in tRNA + diphosphate</text>
        <dbReference type="Rhea" id="RHEA:26482"/>
        <dbReference type="Rhea" id="RHEA-COMP:10162"/>
        <dbReference type="Rhea" id="RHEA-COMP:10375"/>
        <dbReference type="ChEBI" id="CHEBI:33019"/>
        <dbReference type="ChEBI" id="CHEBI:57623"/>
        <dbReference type="ChEBI" id="CHEBI:74411"/>
        <dbReference type="ChEBI" id="CHEBI:74415"/>
        <dbReference type="EC" id="2.5.1.75"/>
    </reaction>
</comment>
<comment type="cofactor">
    <cofactor evidence="1">
        <name>Mg(2+)</name>
        <dbReference type="ChEBI" id="CHEBI:18420"/>
    </cofactor>
</comment>
<comment type="subunit">
    <text evidence="1">Monomer.</text>
</comment>
<comment type="similarity">
    <text evidence="1">Belongs to the IPP transferase family.</text>
</comment>
<reference key="1">
    <citation type="journal article" date="2000" name="Nature">
        <title>DNA sequence of both chromosomes of the cholera pathogen Vibrio cholerae.</title>
        <authorList>
            <person name="Heidelberg J.F."/>
            <person name="Eisen J.A."/>
            <person name="Nelson W.C."/>
            <person name="Clayton R.A."/>
            <person name="Gwinn M.L."/>
            <person name="Dodson R.J."/>
            <person name="Haft D.H."/>
            <person name="Hickey E.K."/>
            <person name="Peterson J.D."/>
            <person name="Umayam L.A."/>
            <person name="Gill S.R."/>
            <person name="Nelson K.E."/>
            <person name="Read T.D."/>
            <person name="Tettelin H."/>
            <person name="Richardson D.L."/>
            <person name="Ermolaeva M.D."/>
            <person name="Vamathevan J.J."/>
            <person name="Bass S."/>
            <person name="Qin H."/>
            <person name="Dragoi I."/>
            <person name="Sellers P."/>
            <person name="McDonald L.A."/>
            <person name="Utterback T.R."/>
            <person name="Fleischmann R.D."/>
            <person name="Nierman W.C."/>
            <person name="White O."/>
            <person name="Salzberg S.L."/>
            <person name="Smith H.O."/>
            <person name="Colwell R.R."/>
            <person name="Mekalanos J.J."/>
            <person name="Venter J.C."/>
            <person name="Fraser C.M."/>
        </authorList>
    </citation>
    <scope>NUCLEOTIDE SEQUENCE [LARGE SCALE GENOMIC DNA]</scope>
    <source>
        <strain>ATCC 39315 / El Tor Inaba N16961</strain>
    </source>
</reference>
<protein>
    <recommendedName>
        <fullName evidence="1">tRNA dimethylallyltransferase</fullName>
        <ecNumber evidence="1">2.5.1.75</ecNumber>
    </recommendedName>
    <alternativeName>
        <fullName evidence="1">Dimethylallyl diphosphate:tRNA dimethylallyltransferase</fullName>
        <shortName evidence="1">DMAPP:tRNA dimethylallyltransferase</shortName>
        <shortName evidence="1">DMATase</shortName>
    </alternativeName>
    <alternativeName>
        <fullName evidence="1">Isopentenyl-diphosphate:tRNA isopentenyltransferase</fullName>
        <shortName evidence="1">IPP transferase</shortName>
        <shortName evidence="1">IPPT</shortName>
        <shortName evidence="1">IPTase</shortName>
    </alternativeName>
</protein>
<keyword id="KW-0067">ATP-binding</keyword>
<keyword id="KW-0460">Magnesium</keyword>
<keyword id="KW-0547">Nucleotide-binding</keyword>
<keyword id="KW-1185">Reference proteome</keyword>
<keyword id="KW-0808">Transferase</keyword>
<keyword id="KW-0819">tRNA processing</keyword>
<proteinExistence type="inferred from homology"/>
<accession>Q9KV12</accession>
<organism>
    <name type="scientific">Vibrio cholerae serotype O1 (strain ATCC 39315 / El Tor Inaba N16961)</name>
    <dbReference type="NCBI Taxonomy" id="243277"/>
    <lineage>
        <taxon>Bacteria</taxon>
        <taxon>Pseudomonadati</taxon>
        <taxon>Pseudomonadota</taxon>
        <taxon>Gammaproteobacteria</taxon>
        <taxon>Vibrionales</taxon>
        <taxon>Vibrionaceae</taxon>
        <taxon>Vibrio</taxon>
    </lineage>
</organism>